<name>YIDC_LEPBJ</name>
<protein>
    <recommendedName>
        <fullName evidence="1">Membrane protein insertase YidC</fullName>
    </recommendedName>
    <alternativeName>
        <fullName evidence="1">Foldase YidC</fullName>
    </alternativeName>
    <alternativeName>
        <fullName evidence="1">Membrane integrase YidC</fullName>
    </alternativeName>
    <alternativeName>
        <fullName evidence="1">Membrane protein YidC</fullName>
    </alternativeName>
</protein>
<evidence type="ECO:0000255" key="1">
    <source>
        <dbReference type="HAMAP-Rule" id="MF_01810"/>
    </source>
</evidence>
<evidence type="ECO:0000256" key="2">
    <source>
        <dbReference type="SAM" id="MobiDB-lite"/>
    </source>
</evidence>
<feature type="chain" id="PRO_1000070116" description="Membrane protein insertase YidC">
    <location>
        <begin position="1"/>
        <end position="622"/>
    </location>
</feature>
<feature type="transmembrane region" description="Helical" evidence="1">
    <location>
        <begin position="8"/>
        <end position="28"/>
    </location>
</feature>
<feature type="transmembrane region" description="Helical" evidence="1">
    <location>
        <begin position="413"/>
        <end position="433"/>
    </location>
</feature>
<feature type="transmembrane region" description="Helical" evidence="1">
    <location>
        <begin position="484"/>
        <end position="504"/>
    </location>
</feature>
<feature type="transmembrane region" description="Helical" evidence="1">
    <location>
        <begin position="532"/>
        <end position="552"/>
    </location>
</feature>
<feature type="transmembrane region" description="Helical" evidence="1">
    <location>
        <begin position="571"/>
        <end position="591"/>
    </location>
</feature>
<feature type="region of interest" description="Disordered" evidence="2">
    <location>
        <begin position="33"/>
        <end position="70"/>
    </location>
</feature>
<feature type="compositionally biased region" description="Basic and acidic residues" evidence="2">
    <location>
        <begin position="33"/>
        <end position="61"/>
    </location>
</feature>
<reference key="1">
    <citation type="journal article" date="2006" name="Proc. Natl. Acad. Sci. U.S.A.">
        <title>Genome reduction in Leptospira borgpetersenii reflects limited transmission potential.</title>
        <authorList>
            <person name="Bulach D.M."/>
            <person name="Zuerner R.L."/>
            <person name="Wilson P."/>
            <person name="Seemann T."/>
            <person name="McGrath A."/>
            <person name="Cullen P.A."/>
            <person name="Davis J."/>
            <person name="Johnson M."/>
            <person name="Kuczek E."/>
            <person name="Alt D.P."/>
            <person name="Peterson-Burch B."/>
            <person name="Coppel R.L."/>
            <person name="Rood J.I."/>
            <person name="Davies J.K."/>
            <person name="Adler B."/>
        </authorList>
    </citation>
    <scope>NUCLEOTIDE SEQUENCE [LARGE SCALE GENOMIC DNA]</scope>
    <source>
        <strain>JB197</strain>
    </source>
</reference>
<sequence length="622" mass="70798">MEDRQSRLFLALILSMGIWMGVNYFFFPPTPKKTSETKEVKVDKPSDDKQDQIQKEKKESRTTIPSKGTKIIPSESKKTLVVTESYIVEFSSLGGRISKFYVKDFTGPNGELVQVARKDPETLIVDGKTYYGVELSREKGFDFNFTDSLNELPHSEWNRIPFSLAENKADHSVVFSAFSPDKTYQLKKTFRFFDRENYFKVTVSVINLTKEKLSFASQKNVQYLRTFGSLGPFPKDRPLNDRDTANFFRFYHLDGSFNDTLDGSSSVGFWSSIVNFFTGNSGVDESFSLKTSTGGVDFAGTGSRYFIAVADPLDHKPQGIILDNRPKNESGAVLVYNNITLGPGEVYNLDFASYVGIRESIGMVFHDPELDPSQTKNSPFAGLSSDLNKSFNQGITTPFRNGIIWVLKQIYRFTIPNYGWSIIIFAILFKLVFYPLNQKQAESMKKMQELSPQLKTINEKFANDPKMRQQKTMELYKKNNVNPVGGCLPMVIQIPIFIALYTAFSDTIDLWNSPFLWVKDLSEPDVIWTSPAIPYFTQTGIGLNLLALLMVGTQIFQTRMTSVSMDPNQKMLMYVMPVMMLYIFWNMPSGVTLYWTFQNVLSIGQQWVTNHLKKTEAKKKAV</sequence>
<dbReference type="EMBL" id="CP000350">
    <property type="protein sequence ID" value="ABJ74890.1"/>
    <property type="molecule type" value="Genomic_DNA"/>
</dbReference>
<dbReference type="RefSeq" id="WP_011671159.1">
    <property type="nucleotide sequence ID" value="NC_008510.1"/>
</dbReference>
<dbReference type="SMR" id="Q04W30"/>
<dbReference type="KEGG" id="lbj:LBJ_0147"/>
<dbReference type="HOGENOM" id="CLU_016535_3_0_12"/>
<dbReference type="Proteomes" id="UP000000656">
    <property type="component" value="Chromosome 1"/>
</dbReference>
<dbReference type="GO" id="GO:0005886">
    <property type="term" value="C:plasma membrane"/>
    <property type="evidence" value="ECO:0007669"/>
    <property type="project" value="UniProtKB-SubCell"/>
</dbReference>
<dbReference type="GO" id="GO:0032977">
    <property type="term" value="F:membrane insertase activity"/>
    <property type="evidence" value="ECO:0007669"/>
    <property type="project" value="InterPro"/>
</dbReference>
<dbReference type="GO" id="GO:0051205">
    <property type="term" value="P:protein insertion into membrane"/>
    <property type="evidence" value="ECO:0007669"/>
    <property type="project" value="TreeGrafter"/>
</dbReference>
<dbReference type="GO" id="GO:0015031">
    <property type="term" value="P:protein transport"/>
    <property type="evidence" value="ECO:0007669"/>
    <property type="project" value="UniProtKB-KW"/>
</dbReference>
<dbReference type="CDD" id="cd20070">
    <property type="entry name" value="5TM_YidC_Alb3"/>
    <property type="match status" value="1"/>
</dbReference>
<dbReference type="Gene3D" id="2.70.98.90">
    <property type="match status" value="1"/>
</dbReference>
<dbReference type="HAMAP" id="MF_01810">
    <property type="entry name" value="YidC_type1"/>
    <property type="match status" value="1"/>
</dbReference>
<dbReference type="InterPro" id="IPR019998">
    <property type="entry name" value="Membr_insert_YidC"/>
</dbReference>
<dbReference type="InterPro" id="IPR001708">
    <property type="entry name" value="YidC/ALB3/OXA1/COX18"/>
</dbReference>
<dbReference type="InterPro" id="IPR028055">
    <property type="entry name" value="YidC/Oxa/ALB_C"/>
</dbReference>
<dbReference type="InterPro" id="IPR047196">
    <property type="entry name" value="YidC_ALB_C"/>
</dbReference>
<dbReference type="InterPro" id="IPR038221">
    <property type="entry name" value="YidC_periplasmic_sf"/>
</dbReference>
<dbReference type="NCBIfam" id="TIGR03592">
    <property type="entry name" value="yidC_oxa1_cterm"/>
    <property type="match status" value="1"/>
</dbReference>
<dbReference type="PANTHER" id="PTHR12428:SF65">
    <property type="entry name" value="CYTOCHROME C OXIDASE ASSEMBLY PROTEIN COX18, MITOCHONDRIAL"/>
    <property type="match status" value="1"/>
</dbReference>
<dbReference type="PANTHER" id="PTHR12428">
    <property type="entry name" value="OXA1"/>
    <property type="match status" value="1"/>
</dbReference>
<dbReference type="Pfam" id="PF02096">
    <property type="entry name" value="60KD_IMP"/>
    <property type="match status" value="1"/>
</dbReference>
<gene>
    <name evidence="1" type="primary">yidC</name>
    <name type="ordered locus">LBJ_0147</name>
</gene>
<comment type="function">
    <text evidence="1">Required for the insertion and/or proper folding and/or complex formation of integral membrane proteins into the membrane. Involved in integration of membrane proteins that insert both dependently and independently of the Sec translocase complex, as well as at least some lipoproteins. Aids folding of multispanning membrane proteins.</text>
</comment>
<comment type="subunit">
    <text evidence="1">Interacts with the Sec translocase complex via SecD. Specifically interacts with transmembrane segments of nascent integral membrane proteins during membrane integration.</text>
</comment>
<comment type="subcellular location">
    <subcellularLocation>
        <location evidence="1">Cell inner membrane</location>
        <topology evidence="1">Multi-pass membrane protein</topology>
    </subcellularLocation>
</comment>
<comment type="similarity">
    <text evidence="1">Belongs to the OXA1/ALB3/YidC family. Type 1 subfamily.</text>
</comment>
<keyword id="KW-0997">Cell inner membrane</keyword>
<keyword id="KW-1003">Cell membrane</keyword>
<keyword id="KW-0143">Chaperone</keyword>
<keyword id="KW-0472">Membrane</keyword>
<keyword id="KW-0653">Protein transport</keyword>
<keyword id="KW-0812">Transmembrane</keyword>
<keyword id="KW-1133">Transmembrane helix</keyword>
<keyword id="KW-0813">Transport</keyword>
<accession>Q04W30</accession>
<proteinExistence type="inferred from homology"/>
<organism>
    <name type="scientific">Leptospira borgpetersenii serovar Hardjo-bovis (strain JB197)</name>
    <dbReference type="NCBI Taxonomy" id="355277"/>
    <lineage>
        <taxon>Bacteria</taxon>
        <taxon>Pseudomonadati</taxon>
        <taxon>Spirochaetota</taxon>
        <taxon>Spirochaetia</taxon>
        <taxon>Leptospirales</taxon>
        <taxon>Leptospiraceae</taxon>
        <taxon>Leptospira</taxon>
    </lineage>
</organism>